<proteinExistence type="inferred from homology"/>
<accession>Q96YW6</accession>
<reference key="1">
    <citation type="journal article" date="2001" name="DNA Res.">
        <title>Complete genome sequence of an aerobic thermoacidophilic Crenarchaeon, Sulfolobus tokodaii strain7.</title>
        <authorList>
            <person name="Kawarabayasi Y."/>
            <person name="Hino Y."/>
            <person name="Horikawa H."/>
            <person name="Jin-no K."/>
            <person name="Takahashi M."/>
            <person name="Sekine M."/>
            <person name="Baba S."/>
            <person name="Ankai A."/>
            <person name="Kosugi H."/>
            <person name="Hosoyama A."/>
            <person name="Fukui S."/>
            <person name="Nagai Y."/>
            <person name="Nishijima K."/>
            <person name="Otsuka R."/>
            <person name="Nakazawa H."/>
            <person name="Takamiya M."/>
            <person name="Kato Y."/>
            <person name="Yoshizawa T."/>
            <person name="Tanaka T."/>
            <person name="Kudoh Y."/>
            <person name="Yamazaki J."/>
            <person name="Kushida N."/>
            <person name="Oguchi A."/>
            <person name="Aoki K."/>
            <person name="Masuda S."/>
            <person name="Yanagii M."/>
            <person name="Nishimura M."/>
            <person name="Yamagishi A."/>
            <person name="Oshima T."/>
            <person name="Kikuchi H."/>
        </authorList>
    </citation>
    <scope>NUCLEOTIDE SEQUENCE [LARGE SCALE GENOMIC DNA]</scope>
    <source>
        <strain>DSM 16993 / JCM 10545 / NBRC 100140 / 7</strain>
    </source>
</reference>
<comment type="similarity">
    <text evidence="1">Belongs to the MEMO1 family.</text>
</comment>
<dbReference type="EMBL" id="BA000023">
    <property type="protein sequence ID" value="BAB67160.1"/>
    <property type="molecule type" value="Genomic_DNA"/>
</dbReference>
<dbReference type="RefSeq" id="WP_010980136.1">
    <property type="nucleotide sequence ID" value="NC_003106.2"/>
</dbReference>
<dbReference type="SMR" id="Q96YW6"/>
<dbReference type="STRING" id="273063.STK_20620"/>
<dbReference type="GeneID" id="1460126"/>
<dbReference type="KEGG" id="sto:STK_20620"/>
<dbReference type="PATRIC" id="fig|273063.9.peg.2349"/>
<dbReference type="eggNOG" id="arCOG01728">
    <property type="taxonomic scope" value="Archaea"/>
</dbReference>
<dbReference type="OrthoDB" id="372162at2157"/>
<dbReference type="Proteomes" id="UP000001015">
    <property type="component" value="Chromosome"/>
</dbReference>
<dbReference type="CDD" id="cd07361">
    <property type="entry name" value="MEMO_like"/>
    <property type="match status" value="1"/>
</dbReference>
<dbReference type="Gene3D" id="3.40.830.10">
    <property type="entry name" value="LigB-like"/>
    <property type="match status" value="1"/>
</dbReference>
<dbReference type="HAMAP" id="MF_00055">
    <property type="entry name" value="MEMO1"/>
    <property type="match status" value="1"/>
</dbReference>
<dbReference type="InterPro" id="IPR002737">
    <property type="entry name" value="MEMO1_fam"/>
</dbReference>
<dbReference type="NCBIfam" id="TIGR04336">
    <property type="entry name" value="AmmeMemoSam_B"/>
    <property type="match status" value="1"/>
</dbReference>
<dbReference type="PANTHER" id="PTHR11060">
    <property type="entry name" value="PROTEIN MEMO1"/>
    <property type="match status" value="1"/>
</dbReference>
<dbReference type="PANTHER" id="PTHR11060:SF0">
    <property type="entry name" value="PROTEIN MEMO1"/>
    <property type="match status" value="1"/>
</dbReference>
<dbReference type="Pfam" id="PF01875">
    <property type="entry name" value="Memo"/>
    <property type="match status" value="1"/>
</dbReference>
<keyword id="KW-1185">Reference proteome</keyword>
<protein>
    <recommendedName>
        <fullName evidence="1">MEMO1 family protein STK_20620</fullName>
    </recommendedName>
</protein>
<sequence>MIRLPAVAGAFYEGEEDKLKKQIEWSFLHPLGPGKIPQVPPQKSKRNNLFFIVPHAGYMYSGPVAAHAYYYLASEGIPDTVIILGPNHTGLGSYVSLWPKGKWKTPLGEIEIDEQIAMDLVRESEVIDIDEKAHLYEHSIEVQVPFLQYFFDSKTKIVPIVIMMQTPEISEYLAEGISKIMQKYKDKDIVVIASSDMNHYEPHEKTIEKDNMAIEKILSLDYKGLFNVVEEKDVTACGFGPMMTVLMLAKKFNKKPYVLKHATSGDTSGDKSSVVGYLSVRFGD</sequence>
<organism>
    <name type="scientific">Sulfurisphaera tokodaii (strain DSM 16993 / JCM 10545 / NBRC 100140 / 7)</name>
    <name type="common">Sulfolobus tokodaii</name>
    <dbReference type="NCBI Taxonomy" id="273063"/>
    <lineage>
        <taxon>Archaea</taxon>
        <taxon>Thermoproteota</taxon>
        <taxon>Thermoprotei</taxon>
        <taxon>Sulfolobales</taxon>
        <taxon>Sulfolobaceae</taxon>
        <taxon>Sulfurisphaera</taxon>
    </lineage>
</organism>
<feature type="chain" id="PRO_0000134391" description="MEMO1 family protein STK_20620">
    <location>
        <begin position="1"/>
        <end position="284"/>
    </location>
</feature>
<evidence type="ECO:0000255" key="1">
    <source>
        <dbReference type="HAMAP-Rule" id="MF_00055"/>
    </source>
</evidence>
<gene>
    <name type="ordered locus">STK_20620</name>
</gene>
<name>Y2062_SULTO</name>